<gene>
    <name evidence="1" type="primary">atpA</name>
    <name type="ordered locus">LS215_1674</name>
</gene>
<keyword id="KW-0066">ATP synthesis</keyword>
<keyword id="KW-0067">ATP-binding</keyword>
<keyword id="KW-1003">Cell membrane</keyword>
<keyword id="KW-0375">Hydrogen ion transport</keyword>
<keyword id="KW-0406">Ion transport</keyword>
<keyword id="KW-0472">Membrane</keyword>
<keyword id="KW-0547">Nucleotide-binding</keyword>
<keyword id="KW-1278">Translocase</keyword>
<keyword id="KW-0813">Transport</keyword>
<feature type="chain" id="PRO_1000205034" description="A-type ATP synthase subunit A">
    <location>
        <begin position="1"/>
        <end position="592"/>
    </location>
</feature>
<feature type="binding site" evidence="1">
    <location>
        <begin position="233"/>
        <end position="240"/>
    </location>
    <ligand>
        <name>ATP</name>
        <dbReference type="ChEBI" id="CHEBI:30616"/>
    </ligand>
</feature>
<protein>
    <recommendedName>
        <fullName evidence="1">A-type ATP synthase subunit A</fullName>
        <ecNumber evidence="1">7.1.2.2</ecNumber>
    </recommendedName>
</protein>
<name>AATA_SACI2</name>
<proteinExistence type="inferred from homology"/>
<comment type="function">
    <text evidence="1">Component of the A-type ATP synthase that produces ATP from ADP in the presence of a proton gradient across the membrane. The A chain is the catalytic subunit.</text>
</comment>
<comment type="catalytic activity">
    <reaction evidence="1">
        <text>ATP + H2O + 4 H(+)(in) = ADP + phosphate + 5 H(+)(out)</text>
        <dbReference type="Rhea" id="RHEA:57720"/>
        <dbReference type="ChEBI" id="CHEBI:15377"/>
        <dbReference type="ChEBI" id="CHEBI:15378"/>
        <dbReference type="ChEBI" id="CHEBI:30616"/>
        <dbReference type="ChEBI" id="CHEBI:43474"/>
        <dbReference type="ChEBI" id="CHEBI:456216"/>
        <dbReference type="EC" id="7.1.2.2"/>
    </reaction>
</comment>
<comment type="subunit">
    <text evidence="1">Has multiple subunits with at least A(3), B(3), C, D, E, F, H, I and proteolipid K(x).</text>
</comment>
<comment type="subcellular location">
    <subcellularLocation>
        <location evidence="1">Cell membrane</location>
        <topology evidence="1">Peripheral membrane protein</topology>
    </subcellularLocation>
</comment>
<comment type="similarity">
    <text evidence="1">Belongs to the ATPase alpha/beta chains family.</text>
</comment>
<accession>C3MQL5</accession>
<sequence>MNNGRIVRINGPLVVADNMKNAQMYEVVEVGEPRLIGEITRIEGDRAFIQVYEDTSGIKPNEPVYRTGAPLSIELGPGLIGKIFDGLQRPLDSIKELTKSPFIARGIKVPSVDRKTKWHFIPKVKKGDKIEGGDIIGIVNETPLVEHRILVPPYVHGTLKEIVAEGDYTVEDPIAVVDMNGDEVPIKLMQRWPVRIPRPFREKLEPTEPLLTGTRVLDTIFPIAKGGTAAIPGPFGSGKTVTLQSLAKWSAAKIVIYVGCGERGNEMTDELRQFPSLKDPWTGRPLLERTILVANTSNMPVAAREASIYVGITMAEYFRDQGYDTLLVADSTSRWAEALRDLGGRMEEMPAEEGFPSYLPSRLAEYYERAGRVKTVGKPERFGSVTVASAVSPPGGDFTEPVTSQTLRFVKVFWPLDVSLAQARHYPAINWLQGFSAYVDLVANWWNTNVDPKWREMRDMMVRTLIREDELRQIVRLVGPESLAEKDKLVLETARLIKEAFLKQNAYDDIDAFSSPQKQARVMRLIYLFNTHASRLVERGIPTKKIVDSMGQLLPEIIRSKAAIKNDELNKYDELERKLISVFENLEKEAGT</sequence>
<reference key="1">
    <citation type="journal article" date="2009" name="Proc. Natl. Acad. Sci. U.S.A.">
        <title>Biogeography of the Sulfolobus islandicus pan-genome.</title>
        <authorList>
            <person name="Reno M.L."/>
            <person name="Held N.L."/>
            <person name="Fields C.J."/>
            <person name="Burke P.V."/>
            <person name="Whitaker R.J."/>
        </authorList>
    </citation>
    <scope>NUCLEOTIDE SEQUENCE [LARGE SCALE GENOMIC DNA]</scope>
    <source>
        <strain>L.S.2.15 / Lassen #1</strain>
    </source>
</reference>
<dbReference type="EC" id="7.1.2.2" evidence="1"/>
<dbReference type="EMBL" id="CP001399">
    <property type="protein sequence ID" value="ACP35678.1"/>
    <property type="molecule type" value="Genomic_DNA"/>
</dbReference>
<dbReference type="RefSeq" id="WP_012713820.1">
    <property type="nucleotide sequence ID" value="NC_012589.1"/>
</dbReference>
<dbReference type="SMR" id="C3MQL5"/>
<dbReference type="GeneID" id="7799308"/>
<dbReference type="KEGG" id="sis:LS215_1674"/>
<dbReference type="HOGENOM" id="CLU_008162_3_1_2"/>
<dbReference type="OrthoDB" id="115235at2157"/>
<dbReference type="Proteomes" id="UP000001747">
    <property type="component" value="Chromosome"/>
</dbReference>
<dbReference type="GO" id="GO:0005886">
    <property type="term" value="C:plasma membrane"/>
    <property type="evidence" value="ECO:0007669"/>
    <property type="project" value="UniProtKB-SubCell"/>
</dbReference>
<dbReference type="GO" id="GO:0033178">
    <property type="term" value="C:proton-transporting two-sector ATPase complex, catalytic domain"/>
    <property type="evidence" value="ECO:0007669"/>
    <property type="project" value="InterPro"/>
</dbReference>
<dbReference type="GO" id="GO:0005524">
    <property type="term" value="F:ATP binding"/>
    <property type="evidence" value="ECO:0007669"/>
    <property type="project" value="UniProtKB-UniRule"/>
</dbReference>
<dbReference type="GO" id="GO:0016887">
    <property type="term" value="F:ATP hydrolysis activity"/>
    <property type="evidence" value="ECO:0007669"/>
    <property type="project" value="InterPro"/>
</dbReference>
<dbReference type="GO" id="GO:0046933">
    <property type="term" value="F:proton-transporting ATP synthase activity, rotational mechanism"/>
    <property type="evidence" value="ECO:0007669"/>
    <property type="project" value="UniProtKB-UniRule"/>
</dbReference>
<dbReference type="GO" id="GO:0046961">
    <property type="term" value="F:proton-transporting ATPase activity, rotational mechanism"/>
    <property type="evidence" value="ECO:0007669"/>
    <property type="project" value="InterPro"/>
</dbReference>
<dbReference type="GO" id="GO:0042777">
    <property type="term" value="P:proton motive force-driven plasma membrane ATP synthesis"/>
    <property type="evidence" value="ECO:0007669"/>
    <property type="project" value="UniProtKB-UniRule"/>
</dbReference>
<dbReference type="CDD" id="cd18111">
    <property type="entry name" value="ATP-synt_V_A-type_alpha_C"/>
    <property type="match status" value="1"/>
</dbReference>
<dbReference type="CDD" id="cd18119">
    <property type="entry name" value="ATP-synt_V_A-type_alpha_N"/>
    <property type="match status" value="1"/>
</dbReference>
<dbReference type="CDD" id="cd01134">
    <property type="entry name" value="V_A-ATPase_A"/>
    <property type="match status" value="1"/>
</dbReference>
<dbReference type="FunFam" id="1.10.1140.10:FF:000002">
    <property type="entry name" value="V-type proton ATPase catalytic subunit A"/>
    <property type="match status" value="1"/>
</dbReference>
<dbReference type="FunFam" id="2.40.30.20:FF:000002">
    <property type="entry name" value="V-type proton ATPase catalytic subunit A"/>
    <property type="match status" value="1"/>
</dbReference>
<dbReference type="FunFam" id="2.40.50.100:FF:000008">
    <property type="entry name" value="V-type proton ATPase catalytic subunit A"/>
    <property type="match status" value="1"/>
</dbReference>
<dbReference type="Gene3D" id="2.40.30.20">
    <property type="match status" value="1"/>
</dbReference>
<dbReference type="Gene3D" id="2.40.50.100">
    <property type="match status" value="1"/>
</dbReference>
<dbReference type="Gene3D" id="1.10.1140.10">
    <property type="entry name" value="Bovine Mitochondrial F1-atpase, Atp Synthase Beta Chain, Chain D, domain 3"/>
    <property type="match status" value="1"/>
</dbReference>
<dbReference type="Gene3D" id="3.40.50.300">
    <property type="entry name" value="P-loop containing nucleotide triphosphate hydrolases"/>
    <property type="match status" value="1"/>
</dbReference>
<dbReference type="HAMAP" id="MF_00309">
    <property type="entry name" value="ATP_synth_A_arch"/>
    <property type="match status" value="1"/>
</dbReference>
<dbReference type="InterPro" id="IPR003593">
    <property type="entry name" value="AAA+_ATPase"/>
</dbReference>
<dbReference type="InterPro" id="IPR055190">
    <property type="entry name" value="ATP-synt_VA_C"/>
</dbReference>
<dbReference type="InterPro" id="IPR031686">
    <property type="entry name" value="ATP-synth_a_Xtn"/>
</dbReference>
<dbReference type="InterPro" id="IPR023366">
    <property type="entry name" value="ATP_synth_asu-like_sf"/>
</dbReference>
<dbReference type="InterPro" id="IPR005726">
    <property type="entry name" value="ATP_synth_asu_arc"/>
</dbReference>
<dbReference type="InterPro" id="IPR004100">
    <property type="entry name" value="ATPase_F1/V1/A1_a/bsu_N"/>
</dbReference>
<dbReference type="InterPro" id="IPR036121">
    <property type="entry name" value="ATPase_F1/V1/A1_a/bsu_N_sf"/>
</dbReference>
<dbReference type="InterPro" id="IPR000194">
    <property type="entry name" value="ATPase_F1/V1/A1_a/bsu_nucl-bd"/>
</dbReference>
<dbReference type="InterPro" id="IPR024034">
    <property type="entry name" value="ATPase_F1/V1_b/a_C"/>
</dbReference>
<dbReference type="InterPro" id="IPR027417">
    <property type="entry name" value="P-loop_NTPase"/>
</dbReference>
<dbReference type="InterPro" id="IPR022878">
    <property type="entry name" value="V-ATPase_asu"/>
</dbReference>
<dbReference type="NCBIfam" id="TIGR01043">
    <property type="entry name" value="ATP_syn_A_arch"/>
    <property type="match status" value="1"/>
</dbReference>
<dbReference type="NCBIfam" id="NF003220">
    <property type="entry name" value="PRK04192.1"/>
    <property type="match status" value="1"/>
</dbReference>
<dbReference type="PANTHER" id="PTHR43607:SF1">
    <property type="entry name" value="H(+)-TRANSPORTING TWO-SECTOR ATPASE"/>
    <property type="match status" value="1"/>
</dbReference>
<dbReference type="PANTHER" id="PTHR43607">
    <property type="entry name" value="V-TYPE PROTON ATPASE CATALYTIC SUBUNIT A"/>
    <property type="match status" value="1"/>
</dbReference>
<dbReference type="Pfam" id="PF00006">
    <property type="entry name" value="ATP-synt_ab"/>
    <property type="match status" value="1"/>
</dbReference>
<dbReference type="Pfam" id="PF02874">
    <property type="entry name" value="ATP-synt_ab_N"/>
    <property type="match status" value="1"/>
</dbReference>
<dbReference type="Pfam" id="PF16886">
    <property type="entry name" value="ATP-synt_ab_Xtn"/>
    <property type="match status" value="1"/>
</dbReference>
<dbReference type="Pfam" id="PF22919">
    <property type="entry name" value="ATP-synt_VA_C"/>
    <property type="match status" value="1"/>
</dbReference>
<dbReference type="SMART" id="SM00382">
    <property type="entry name" value="AAA"/>
    <property type="match status" value="1"/>
</dbReference>
<dbReference type="SUPFAM" id="SSF47917">
    <property type="entry name" value="C-terminal domain of alpha and beta subunits of F1 ATP synthase"/>
    <property type="match status" value="1"/>
</dbReference>
<dbReference type="SUPFAM" id="SSF50615">
    <property type="entry name" value="N-terminal domain of alpha and beta subunits of F1 ATP synthase"/>
    <property type="match status" value="1"/>
</dbReference>
<dbReference type="SUPFAM" id="SSF52540">
    <property type="entry name" value="P-loop containing nucleoside triphosphate hydrolases"/>
    <property type="match status" value="1"/>
</dbReference>
<organism>
    <name type="scientific">Saccharolobus islandicus (strain L.S.2.15 / Lassen #1)</name>
    <name type="common">Sulfolobus islandicus</name>
    <dbReference type="NCBI Taxonomy" id="429572"/>
    <lineage>
        <taxon>Archaea</taxon>
        <taxon>Thermoproteota</taxon>
        <taxon>Thermoprotei</taxon>
        <taxon>Sulfolobales</taxon>
        <taxon>Sulfolobaceae</taxon>
        <taxon>Saccharolobus</taxon>
    </lineage>
</organism>
<evidence type="ECO:0000255" key="1">
    <source>
        <dbReference type="HAMAP-Rule" id="MF_00309"/>
    </source>
</evidence>